<feature type="chain" id="PRO_0000139684" description="Xanthine-guanine phosphoribosyltransferase">
    <location>
        <begin position="1"/>
        <end position="152"/>
    </location>
</feature>
<feature type="binding site" evidence="1">
    <location>
        <begin position="37"/>
        <end position="38"/>
    </location>
    <ligand>
        <name>5-phospho-alpha-D-ribose 1-diphosphate</name>
        <dbReference type="ChEBI" id="CHEBI:58017"/>
    </ligand>
</feature>
<feature type="binding site" evidence="1">
    <location>
        <position position="69"/>
    </location>
    <ligand>
        <name>5-phospho-alpha-D-ribose 1-diphosphate</name>
        <dbReference type="ChEBI" id="CHEBI:58017"/>
    </ligand>
</feature>
<feature type="binding site" evidence="1">
    <location>
        <position position="69"/>
    </location>
    <ligand>
        <name>GMP</name>
        <dbReference type="ChEBI" id="CHEBI:58115"/>
    </ligand>
</feature>
<feature type="binding site" evidence="1">
    <location>
        <begin position="88"/>
        <end position="96"/>
    </location>
    <ligand>
        <name>5-phospho-alpha-D-ribose 1-diphosphate</name>
        <dbReference type="ChEBI" id="CHEBI:58017"/>
    </ligand>
</feature>
<feature type="binding site" evidence="1">
    <location>
        <position position="89"/>
    </location>
    <ligand>
        <name>Mg(2+)</name>
        <dbReference type="ChEBI" id="CHEBI:18420"/>
    </ligand>
</feature>
<feature type="binding site" evidence="1">
    <location>
        <begin position="92"/>
        <end position="96"/>
    </location>
    <ligand>
        <name>GMP</name>
        <dbReference type="ChEBI" id="CHEBI:58115"/>
    </ligand>
</feature>
<feature type="binding site" evidence="1">
    <location>
        <position position="92"/>
    </location>
    <ligand>
        <name>guanine</name>
        <dbReference type="ChEBI" id="CHEBI:16235"/>
    </ligand>
</feature>
<feature type="binding site" evidence="1">
    <location>
        <position position="92"/>
    </location>
    <ligand>
        <name>xanthine</name>
        <dbReference type="ChEBI" id="CHEBI:17712"/>
    </ligand>
</feature>
<feature type="binding site" evidence="1">
    <location>
        <begin position="134"/>
        <end position="135"/>
    </location>
    <ligand>
        <name>GMP</name>
        <dbReference type="ChEBI" id="CHEBI:58115"/>
    </ligand>
</feature>
<feature type="binding site" evidence="1">
    <location>
        <position position="135"/>
    </location>
    <ligand>
        <name>guanine</name>
        <dbReference type="ChEBI" id="CHEBI:16235"/>
    </ligand>
</feature>
<feature type="binding site" evidence="1">
    <location>
        <position position="135"/>
    </location>
    <ligand>
        <name>xanthine</name>
        <dbReference type="ChEBI" id="CHEBI:17712"/>
    </ligand>
</feature>
<name>XGPT_SALPA</name>
<keyword id="KW-0997">Cell inner membrane</keyword>
<keyword id="KW-1003">Cell membrane</keyword>
<keyword id="KW-0328">Glycosyltransferase</keyword>
<keyword id="KW-0460">Magnesium</keyword>
<keyword id="KW-0472">Membrane</keyword>
<keyword id="KW-0479">Metal-binding</keyword>
<keyword id="KW-0660">Purine salvage</keyword>
<keyword id="KW-0808">Transferase</keyword>
<dbReference type="EC" id="2.4.2.-" evidence="1"/>
<dbReference type="EC" id="2.4.2.22" evidence="1"/>
<dbReference type="EMBL" id="CP000026">
    <property type="protein sequence ID" value="AAV78318.1"/>
    <property type="molecule type" value="Genomic_DNA"/>
</dbReference>
<dbReference type="RefSeq" id="WP_001292018.1">
    <property type="nucleotide sequence ID" value="NC_006511.1"/>
</dbReference>
<dbReference type="SMR" id="Q5PF80"/>
<dbReference type="GeneID" id="66754798"/>
<dbReference type="KEGG" id="spt:SPA2438"/>
<dbReference type="HOGENOM" id="CLU_080904_3_0_6"/>
<dbReference type="UniPathway" id="UPA00602">
    <property type="reaction ID" value="UER00658"/>
</dbReference>
<dbReference type="UniPathway" id="UPA00909">
    <property type="reaction ID" value="UER00887"/>
</dbReference>
<dbReference type="Proteomes" id="UP000008185">
    <property type="component" value="Chromosome"/>
</dbReference>
<dbReference type="GO" id="GO:0005829">
    <property type="term" value="C:cytosol"/>
    <property type="evidence" value="ECO:0007669"/>
    <property type="project" value="TreeGrafter"/>
</dbReference>
<dbReference type="GO" id="GO:0005886">
    <property type="term" value="C:plasma membrane"/>
    <property type="evidence" value="ECO:0007669"/>
    <property type="project" value="UniProtKB-SubCell"/>
</dbReference>
<dbReference type="GO" id="GO:0052657">
    <property type="term" value="F:guanine phosphoribosyltransferase activity"/>
    <property type="evidence" value="ECO:0007669"/>
    <property type="project" value="RHEA"/>
</dbReference>
<dbReference type="GO" id="GO:0004422">
    <property type="term" value="F:hypoxanthine phosphoribosyltransferase activity"/>
    <property type="evidence" value="ECO:0007669"/>
    <property type="project" value="TreeGrafter"/>
</dbReference>
<dbReference type="GO" id="GO:0000287">
    <property type="term" value="F:magnesium ion binding"/>
    <property type="evidence" value="ECO:0007669"/>
    <property type="project" value="UniProtKB-UniRule"/>
</dbReference>
<dbReference type="GO" id="GO:0000310">
    <property type="term" value="F:xanthine phosphoribosyltransferase activity"/>
    <property type="evidence" value="ECO:0007669"/>
    <property type="project" value="UniProtKB-UniRule"/>
</dbReference>
<dbReference type="GO" id="GO:0032263">
    <property type="term" value="P:GMP salvage"/>
    <property type="evidence" value="ECO:0007669"/>
    <property type="project" value="UniProtKB-UniRule"/>
</dbReference>
<dbReference type="GO" id="GO:0032264">
    <property type="term" value="P:IMP salvage"/>
    <property type="evidence" value="ECO:0007669"/>
    <property type="project" value="TreeGrafter"/>
</dbReference>
<dbReference type="GO" id="GO:0006166">
    <property type="term" value="P:purine ribonucleoside salvage"/>
    <property type="evidence" value="ECO:0007669"/>
    <property type="project" value="UniProtKB-KW"/>
</dbReference>
<dbReference type="GO" id="GO:0032265">
    <property type="term" value="P:XMP salvage"/>
    <property type="evidence" value="ECO:0007669"/>
    <property type="project" value="UniProtKB-UniRule"/>
</dbReference>
<dbReference type="CDD" id="cd06223">
    <property type="entry name" value="PRTases_typeI"/>
    <property type="match status" value="1"/>
</dbReference>
<dbReference type="FunFam" id="3.40.50.2020:FF:000009">
    <property type="entry name" value="Xanthine phosphoribosyltransferase"/>
    <property type="match status" value="1"/>
</dbReference>
<dbReference type="Gene3D" id="3.40.50.2020">
    <property type="match status" value="1"/>
</dbReference>
<dbReference type="HAMAP" id="MF_01903">
    <property type="entry name" value="XGPRT"/>
    <property type="match status" value="1"/>
</dbReference>
<dbReference type="InterPro" id="IPR000836">
    <property type="entry name" value="PRibTrfase_dom"/>
</dbReference>
<dbReference type="InterPro" id="IPR029057">
    <property type="entry name" value="PRTase-like"/>
</dbReference>
<dbReference type="InterPro" id="IPR023747">
    <property type="entry name" value="Xanthine_Guanine_PRibTrfase"/>
</dbReference>
<dbReference type="NCBIfam" id="NF006613">
    <property type="entry name" value="PRK09177.1"/>
    <property type="match status" value="1"/>
</dbReference>
<dbReference type="PANTHER" id="PTHR39563">
    <property type="entry name" value="XANTHINE PHOSPHORIBOSYLTRANSFERASE"/>
    <property type="match status" value="1"/>
</dbReference>
<dbReference type="PANTHER" id="PTHR39563:SF1">
    <property type="entry name" value="XANTHINE-GUANINE PHOSPHORIBOSYLTRANSFERASE"/>
    <property type="match status" value="1"/>
</dbReference>
<dbReference type="Pfam" id="PF00156">
    <property type="entry name" value="Pribosyltran"/>
    <property type="match status" value="1"/>
</dbReference>
<dbReference type="SUPFAM" id="SSF53271">
    <property type="entry name" value="PRTase-like"/>
    <property type="match status" value="1"/>
</dbReference>
<dbReference type="PROSITE" id="PS00103">
    <property type="entry name" value="PUR_PYR_PR_TRANSFER"/>
    <property type="match status" value="1"/>
</dbReference>
<proteinExistence type="inferred from homology"/>
<sequence>MSEKYVVTWDMLQIHARKLASRLMPSEQWKGIIAVSRGGLVPGALLARELGIRHVDTVCISSYDHDNQRELKVLKRAEGDGEGFIVIDDLVDTGGTAVAIREMYPKAHFVTIFAKPAGRPLVDDYVIDIPQNTWIEQPWDMGVVFVPPISGR</sequence>
<evidence type="ECO:0000255" key="1">
    <source>
        <dbReference type="HAMAP-Rule" id="MF_01903"/>
    </source>
</evidence>
<reference key="1">
    <citation type="journal article" date="2004" name="Nat. Genet.">
        <title>Comparison of genome degradation in Paratyphi A and Typhi, human-restricted serovars of Salmonella enterica that cause typhoid.</title>
        <authorList>
            <person name="McClelland M."/>
            <person name="Sanderson K.E."/>
            <person name="Clifton S.W."/>
            <person name="Latreille P."/>
            <person name="Porwollik S."/>
            <person name="Sabo A."/>
            <person name="Meyer R."/>
            <person name="Bieri T."/>
            <person name="Ozersky P."/>
            <person name="McLellan M."/>
            <person name="Harkins C.R."/>
            <person name="Wang C."/>
            <person name="Nguyen C."/>
            <person name="Berghoff A."/>
            <person name="Elliott G."/>
            <person name="Kohlberg S."/>
            <person name="Strong C."/>
            <person name="Du F."/>
            <person name="Carter J."/>
            <person name="Kremizki C."/>
            <person name="Layman D."/>
            <person name="Leonard S."/>
            <person name="Sun H."/>
            <person name="Fulton L."/>
            <person name="Nash W."/>
            <person name="Miner T."/>
            <person name="Minx P."/>
            <person name="Delehaunty K."/>
            <person name="Fronick C."/>
            <person name="Magrini V."/>
            <person name="Nhan M."/>
            <person name="Warren W."/>
            <person name="Florea L."/>
            <person name="Spieth J."/>
            <person name="Wilson R.K."/>
        </authorList>
    </citation>
    <scope>NUCLEOTIDE SEQUENCE [LARGE SCALE GENOMIC DNA]</scope>
    <source>
        <strain>ATCC 9150 / SARB42</strain>
    </source>
</reference>
<accession>Q5PF80</accession>
<gene>
    <name evidence="1" type="primary">gpt</name>
    <name type="ordered locus">SPA2438</name>
</gene>
<organism>
    <name type="scientific">Salmonella paratyphi A (strain ATCC 9150 / SARB42)</name>
    <dbReference type="NCBI Taxonomy" id="295319"/>
    <lineage>
        <taxon>Bacteria</taxon>
        <taxon>Pseudomonadati</taxon>
        <taxon>Pseudomonadota</taxon>
        <taxon>Gammaproteobacteria</taxon>
        <taxon>Enterobacterales</taxon>
        <taxon>Enterobacteriaceae</taxon>
        <taxon>Salmonella</taxon>
    </lineage>
</organism>
<comment type="function">
    <text evidence="1">Purine salvage pathway enzyme that catalyzes the transfer of the ribosyl-5-phosphate group from 5-phospho-alpha-D-ribose 1-diphosphate (PRPP) to the N9 position of the 6-oxopurines guanine and xanthine to form the corresponding ribonucleotides GMP (guanosine 5'-monophosphate) and XMP (xanthosine 5'-monophosphate), with the release of PPi. To a lesser extent, also acts on hypoxanthine.</text>
</comment>
<comment type="catalytic activity">
    <reaction evidence="1">
        <text>GMP + diphosphate = guanine + 5-phospho-alpha-D-ribose 1-diphosphate</text>
        <dbReference type="Rhea" id="RHEA:25424"/>
        <dbReference type="ChEBI" id="CHEBI:16235"/>
        <dbReference type="ChEBI" id="CHEBI:33019"/>
        <dbReference type="ChEBI" id="CHEBI:58017"/>
        <dbReference type="ChEBI" id="CHEBI:58115"/>
    </reaction>
    <physiologicalReaction direction="right-to-left" evidence="1">
        <dbReference type="Rhea" id="RHEA:25426"/>
    </physiologicalReaction>
</comment>
<comment type="catalytic activity">
    <reaction evidence="1">
        <text>XMP + diphosphate = xanthine + 5-phospho-alpha-D-ribose 1-diphosphate</text>
        <dbReference type="Rhea" id="RHEA:10800"/>
        <dbReference type="ChEBI" id="CHEBI:17712"/>
        <dbReference type="ChEBI" id="CHEBI:33019"/>
        <dbReference type="ChEBI" id="CHEBI:57464"/>
        <dbReference type="ChEBI" id="CHEBI:58017"/>
        <dbReference type="EC" id="2.4.2.22"/>
    </reaction>
    <physiologicalReaction direction="right-to-left" evidence="1">
        <dbReference type="Rhea" id="RHEA:10802"/>
    </physiologicalReaction>
</comment>
<comment type="catalytic activity">
    <reaction evidence="1">
        <text>IMP + diphosphate = hypoxanthine + 5-phospho-alpha-D-ribose 1-diphosphate</text>
        <dbReference type="Rhea" id="RHEA:17973"/>
        <dbReference type="ChEBI" id="CHEBI:17368"/>
        <dbReference type="ChEBI" id="CHEBI:33019"/>
        <dbReference type="ChEBI" id="CHEBI:58017"/>
        <dbReference type="ChEBI" id="CHEBI:58053"/>
    </reaction>
    <physiologicalReaction direction="right-to-left" evidence="1">
        <dbReference type="Rhea" id="RHEA:17975"/>
    </physiologicalReaction>
</comment>
<comment type="cofactor">
    <cofactor evidence="1">
        <name>Mg(2+)</name>
        <dbReference type="ChEBI" id="CHEBI:18420"/>
    </cofactor>
</comment>
<comment type="pathway">
    <text evidence="1">Purine metabolism; GMP biosynthesis via salvage pathway; GMP from guanine: step 1/1.</text>
</comment>
<comment type="pathway">
    <text evidence="1">Purine metabolism; XMP biosynthesis via salvage pathway; XMP from xanthine: step 1/1.</text>
</comment>
<comment type="subunit">
    <text evidence="1">Homotetramer.</text>
</comment>
<comment type="subcellular location">
    <subcellularLocation>
        <location evidence="1">Cell inner membrane</location>
        <topology evidence="1">Peripheral membrane protein</topology>
    </subcellularLocation>
</comment>
<comment type="similarity">
    <text evidence="1">Belongs to the purine/pyrimidine phosphoribosyltransferase family. XGPT subfamily.</text>
</comment>
<protein>
    <recommendedName>
        <fullName evidence="1">Xanthine-guanine phosphoribosyltransferase</fullName>
        <shortName evidence="1">XGPRT</shortName>
        <ecNumber evidence="1">2.4.2.-</ecNumber>
        <ecNumber evidence="1">2.4.2.22</ecNumber>
    </recommendedName>
    <alternativeName>
        <fullName evidence="1">Xanthine phosphoribosyltransferase</fullName>
    </alternativeName>
</protein>